<protein>
    <recommendedName>
        <fullName>Structural protein p14.5</fullName>
    </recommendedName>
</protein>
<proteinExistence type="inferred from homology"/>
<reference key="1">
    <citation type="submission" date="2003-03" db="EMBL/GenBank/DDBJ databases">
        <title>African swine fever virus genomes.</title>
        <authorList>
            <person name="Kutish G.F."/>
            <person name="Rock D.L."/>
        </authorList>
    </citation>
    <scope>NUCLEOTIDE SEQUENCE [GENOMIC DNA]</scope>
</reference>
<feature type="initiator methionine" description="Removed" evidence="3">
    <location>
        <position position="1"/>
    </location>
</feature>
<feature type="chain" id="PRO_0000373399" description="Structural protein p14.5">
    <location>
        <begin position="2"/>
        <end position="121"/>
    </location>
</feature>
<feature type="region of interest" description="Disordered" evidence="2">
    <location>
        <begin position="1"/>
        <end position="24"/>
    </location>
</feature>
<feature type="region of interest" description="Disordered" evidence="2">
    <location>
        <begin position="84"/>
        <end position="121"/>
    </location>
</feature>
<feature type="compositionally biased region" description="Basic residues" evidence="2">
    <location>
        <begin position="104"/>
        <end position="121"/>
    </location>
</feature>
<feature type="modified residue" description="N-acetylalanine; by host" evidence="1">
    <location>
        <position position="2"/>
    </location>
</feature>
<evidence type="ECO:0000250" key="1">
    <source>
        <dbReference type="UniProtKB" id="Q65201"/>
    </source>
</evidence>
<evidence type="ECO:0000256" key="2">
    <source>
        <dbReference type="SAM" id="MobiDB-lite"/>
    </source>
</evidence>
<evidence type="ECO:0000305" key="3"/>
<dbReference type="EMBL" id="AY261363">
    <property type="status" value="NOT_ANNOTATED_CDS"/>
    <property type="molecule type" value="Genomic_DNA"/>
</dbReference>
<dbReference type="Proteomes" id="UP000000859">
    <property type="component" value="Segment"/>
</dbReference>
<dbReference type="GO" id="GO:0044423">
    <property type="term" value="C:virion component"/>
    <property type="evidence" value="ECO:0007669"/>
    <property type="project" value="UniProtKB-KW"/>
</dbReference>
<dbReference type="GO" id="GO:0003677">
    <property type="term" value="F:DNA binding"/>
    <property type="evidence" value="ECO:0007669"/>
    <property type="project" value="UniProtKB-KW"/>
</dbReference>
<dbReference type="GO" id="GO:0039548">
    <property type="term" value="P:symbiont-mediated suppression of host cytoplasmic pattern recognition receptor signaling pathway via inhibition of IRF3 activity"/>
    <property type="evidence" value="ECO:0007669"/>
    <property type="project" value="UniProtKB-KW"/>
</dbReference>
<organismHost>
    <name type="scientific">Ornithodoros</name>
    <name type="common">relapsing fever ticks</name>
    <dbReference type="NCBI Taxonomy" id="6937"/>
</organismHost>
<organismHost>
    <name type="scientific">Phacochoerus aethiopicus</name>
    <name type="common">Warthog</name>
    <dbReference type="NCBI Taxonomy" id="85517"/>
</organismHost>
<organismHost>
    <name type="scientific">Phacochoerus africanus</name>
    <name type="common">Warthog</name>
    <dbReference type="NCBI Taxonomy" id="41426"/>
</organismHost>
<organismHost>
    <name type="scientific">Potamochoerus larvatus</name>
    <name type="common">Bushpig</name>
    <dbReference type="NCBI Taxonomy" id="273792"/>
</organismHost>
<organismHost>
    <name type="scientific">Sus scrofa</name>
    <name type="common">Pig</name>
    <dbReference type="NCBI Taxonomy" id="9823"/>
</organismHost>
<gene>
    <name type="ordered locus">Pret-145</name>
</gene>
<name>P14_ASFP4</name>
<organism>
    <name type="scientific">African swine fever virus (isolate Tick/South Africa/Pretoriuskop Pr4/1996)</name>
    <name type="common">ASFV</name>
    <dbReference type="NCBI Taxonomy" id="561443"/>
    <lineage>
        <taxon>Viruses</taxon>
        <taxon>Varidnaviria</taxon>
        <taxon>Bamfordvirae</taxon>
        <taxon>Nucleocytoviricota</taxon>
        <taxon>Pokkesviricetes</taxon>
        <taxon>Asfuvirales</taxon>
        <taxon>Asfarviridae</taxon>
        <taxon>Asfivirus</taxon>
        <taxon>African swine fever virus</taxon>
    </lineage>
</organism>
<accession>P0C9Y6</accession>
<keyword id="KW-0007">Acetylation</keyword>
<keyword id="KW-0238">DNA-binding</keyword>
<keyword id="KW-0945">Host-virus interaction</keyword>
<keyword id="KW-1090">Inhibition of host innate immune response by virus</keyword>
<keyword id="KW-1092">Inhibition of host IRF3 by virus</keyword>
<keyword id="KW-1113">Inhibition of host RLR pathway by virus</keyword>
<keyword id="KW-0426">Late protein</keyword>
<keyword id="KW-0899">Viral immunoevasion</keyword>
<keyword id="KW-1188">Viral release from host cell</keyword>
<keyword id="KW-0946">Virion</keyword>
<sequence length="121" mass="13737">MADFNSPIQYLKEDSRDRTSIGSLEYDENSDTIIPSFAAGLEDFEPIPSPTTTSTSLYSQLTHNMEKIAEEEDINFLHDTREFTSLVPEETDNKPEDDEESGAKPKKKKHLFPKLSSHKSK</sequence>
<comment type="function">
    <text evidence="1">Structural protein required for transport of intracellular particles from the assembly sites to the plasma membrane (By similarity). Binds to both ssDNA and dsDNA (By similarity). Suppressed the activation of the cGAS/STING pathway by interfering with the recruitment of IRF3 to TBK1, which in turn suppresses IRF3 phosphorylation, decreasing interferon production (By similarity).</text>
</comment>
<comment type="subunit">
    <text evidence="1">Interacts with the major capsid protein (By similarity). Interacts with host IRF3; this interaction interferes with the recruitment of IRF3 to TBK1 (By similarity).</text>
</comment>
<comment type="subcellular location">
    <subcellularLocation>
        <location evidence="1">Virion</location>
    </subcellularLocation>
    <text evidence="1">Localizes at the surface of the intracellular virion.</text>
</comment>
<comment type="induction">
    <text evidence="3">Expressed in the late phase of the viral replicative cycle.</text>
</comment>
<comment type="PTM">
    <text evidence="1">Acetylated.</text>
</comment>
<comment type="similarity">
    <text evidence="3">Belongs to the asfivirus structural protein p14.5 family.</text>
</comment>